<accession>Q6G9V9</accession>
<gene>
    <name evidence="1" type="primary">hslU</name>
    <name type="ordered locus">SAS1188</name>
</gene>
<organism>
    <name type="scientific">Staphylococcus aureus (strain MSSA476)</name>
    <dbReference type="NCBI Taxonomy" id="282459"/>
    <lineage>
        <taxon>Bacteria</taxon>
        <taxon>Bacillati</taxon>
        <taxon>Bacillota</taxon>
        <taxon>Bacilli</taxon>
        <taxon>Bacillales</taxon>
        <taxon>Staphylococcaceae</taxon>
        <taxon>Staphylococcus</taxon>
    </lineage>
</organism>
<evidence type="ECO:0000255" key="1">
    <source>
        <dbReference type="HAMAP-Rule" id="MF_00249"/>
    </source>
</evidence>
<evidence type="ECO:0000256" key="2">
    <source>
        <dbReference type="SAM" id="MobiDB-lite"/>
    </source>
</evidence>
<feature type="chain" id="PRO_0000160551" description="ATP-dependent protease ATPase subunit HslU">
    <location>
        <begin position="1"/>
        <end position="467"/>
    </location>
</feature>
<feature type="region of interest" description="Disordered" evidence="2">
    <location>
        <begin position="149"/>
        <end position="192"/>
    </location>
</feature>
<feature type="compositionally biased region" description="Basic and acidic residues" evidence="2">
    <location>
        <begin position="178"/>
        <end position="192"/>
    </location>
</feature>
<feature type="binding site" evidence="1">
    <location>
        <position position="22"/>
    </location>
    <ligand>
        <name>ATP</name>
        <dbReference type="ChEBI" id="CHEBI:30616"/>
    </ligand>
</feature>
<feature type="binding site" evidence="1">
    <location>
        <begin position="64"/>
        <end position="69"/>
    </location>
    <ligand>
        <name>ATP</name>
        <dbReference type="ChEBI" id="CHEBI:30616"/>
    </ligand>
</feature>
<feature type="binding site" evidence="1">
    <location>
        <position position="280"/>
    </location>
    <ligand>
        <name>ATP</name>
        <dbReference type="ChEBI" id="CHEBI:30616"/>
    </ligand>
</feature>
<feature type="binding site" evidence="1">
    <location>
        <position position="345"/>
    </location>
    <ligand>
        <name>ATP</name>
        <dbReference type="ChEBI" id="CHEBI:30616"/>
    </ligand>
</feature>
<feature type="binding site" evidence="1">
    <location>
        <position position="417"/>
    </location>
    <ligand>
        <name>ATP</name>
        <dbReference type="ChEBI" id="CHEBI:30616"/>
    </ligand>
</feature>
<reference key="1">
    <citation type="journal article" date="2004" name="Proc. Natl. Acad. Sci. U.S.A.">
        <title>Complete genomes of two clinical Staphylococcus aureus strains: evidence for the rapid evolution of virulence and drug resistance.</title>
        <authorList>
            <person name="Holden M.T.G."/>
            <person name="Feil E.J."/>
            <person name="Lindsay J.A."/>
            <person name="Peacock S.J."/>
            <person name="Day N.P.J."/>
            <person name="Enright M.C."/>
            <person name="Foster T.J."/>
            <person name="Moore C.E."/>
            <person name="Hurst L."/>
            <person name="Atkin R."/>
            <person name="Barron A."/>
            <person name="Bason N."/>
            <person name="Bentley S.D."/>
            <person name="Chillingworth C."/>
            <person name="Chillingworth T."/>
            <person name="Churcher C."/>
            <person name="Clark L."/>
            <person name="Corton C."/>
            <person name="Cronin A."/>
            <person name="Doggett J."/>
            <person name="Dowd L."/>
            <person name="Feltwell T."/>
            <person name="Hance Z."/>
            <person name="Harris B."/>
            <person name="Hauser H."/>
            <person name="Holroyd S."/>
            <person name="Jagels K."/>
            <person name="James K.D."/>
            <person name="Lennard N."/>
            <person name="Line A."/>
            <person name="Mayes R."/>
            <person name="Moule S."/>
            <person name="Mungall K."/>
            <person name="Ormond D."/>
            <person name="Quail M.A."/>
            <person name="Rabbinowitsch E."/>
            <person name="Rutherford K.M."/>
            <person name="Sanders M."/>
            <person name="Sharp S."/>
            <person name="Simmonds M."/>
            <person name="Stevens K."/>
            <person name="Whitehead S."/>
            <person name="Barrell B.G."/>
            <person name="Spratt B.G."/>
            <person name="Parkhill J."/>
        </authorList>
    </citation>
    <scope>NUCLEOTIDE SEQUENCE [LARGE SCALE GENOMIC DNA]</scope>
    <source>
        <strain>MSSA476</strain>
    </source>
</reference>
<keyword id="KW-0067">ATP-binding</keyword>
<keyword id="KW-0143">Chaperone</keyword>
<keyword id="KW-0963">Cytoplasm</keyword>
<keyword id="KW-0547">Nucleotide-binding</keyword>
<sequence length="467" mass="52315">MDTAGIRLTPKEIVSKLNEYIVGQNDAKRKVAIALRNRYRRSLLDEESKQEISPKNILMIGPTGVGKTEIARRMAKVVGAPFIKVEATKFTEVGYVGRDVESMVRDLVDVSVRLVKAQKKSLVQDEATAKANEKLVKLLVPSMKKKASQTNNPLESLFGGAIPNFGQNNEDEEEPPTEEIKTKRSEIKRQLEEGKLEKEKVRIKVEQDPGALGMLGTNQNQQMQEMMNQLMPKKKVEREVAVETARKILADSYADELIDQESANQEALELAEQMGIIFIDEIDKVATNNHNSGQDVSRQGVQRDILPILEGSVIQTKYGTVNTEHMLFIGAGAFHVSKPSDLIPELQGRFPIRVELDSLSVEDFVRILTEPKLSLIKQYEALLQTEEVTVNFTDEAITRLAEIAYQVNQDTDNIGARRLHTILEKMLEDLSFEAPSMPNAVVDITPQYVDDKLKSISTNKDLSAFIL</sequence>
<comment type="function">
    <text evidence="1">ATPase subunit of a proteasome-like degradation complex; this subunit has chaperone activity. The binding of ATP and its subsequent hydrolysis by HslU are essential for unfolding of protein substrates subsequently hydrolyzed by HslV. HslU recognizes the N-terminal part of its protein substrates and unfolds these before they are guided to HslV for hydrolysis.</text>
</comment>
<comment type="subunit">
    <text evidence="1">A double ring-shaped homohexamer of HslV is capped on each side by a ring-shaped HslU homohexamer. The assembly of the HslU/HslV complex is dependent on binding of ATP.</text>
</comment>
<comment type="subcellular location">
    <subcellularLocation>
        <location evidence="1">Cytoplasm</location>
    </subcellularLocation>
</comment>
<comment type="similarity">
    <text evidence="1">Belongs to the ClpX chaperone family. HslU subfamily.</text>
</comment>
<proteinExistence type="inferred from homology"/>
<name>HSLU_STAAS</name>
<dbReference type="EMBL" id="BX571857">
    <property type="protein sequence ID" value="CAG42965.1"/>
    <property type="molecule type" value="Genomic_DNA"/>
</dbReference>
<dbReference type="RefSeq" id="WP_000379054.1">
    <property type="nucleotide sequence ID" value="NC_002953.3"/>
</dbReference>
<dbReference type="SMR" id="Q6G9V9"/>
<dbReference type="KEGG" id="sas:SAS1188"/>
<dbReference type="HOGENOM" id="CLU_033123_0_0_9"/>
<dbReference type="GO" id="GO:0009376">
    <property type="term" value="C:HslUV protease complex"/>
    <property type="evidence" value="ECO:0007669"/>
    <property type="project" value="UniProtKB-UniRule"/>
</dbReference>
<dbReference type="GO" id="GO:0005524">
    <property type="term" value="F:ATP binding"/>
    <property type="evidence" value="ECO:0007669"/>
    <property type="project" value="UniProtKB-UniRule"/>
</dbReference>
<dbReference type="GO" id="GO:0016887">
    <property type="term" value="F:ATP hydrolysis activity"/>
    <property type="evidence" value="ECO:0007669"/>
    <property type="project" value="InterPro"/>
</dbReference>
<dbReference type="GO" id="GO:0008233">
    <property type="term" value="F:peptidase activity"/>
    <property type="evidence" value="ECO:0007669"/>
    <property type="project" value="InterPro"/>
</dbReference>
<dbReference type="GO" id="GO:0036402">
    <property type="term" value="F:proteasome-activating activity"/>
    <property type="evidence" value="ECO:0007669"/>
    <property type="project" value="UniProtKB-UniRule"/>
</dbReference>
<dbReference type="GO" id="GO:0043335">
    <property type="term" value="P:protein unfolding"/>
    <property type="evidence" value="ECO:0007669"/>
    <property type="project" value="UniProtKB-UniRule"/>
</dbReference>
<dbReference type="GO" id="GO:0051603">
    <property type="term" value="P:proteolysis involved in protein catabolic process"/>
    <property type="evidence" value="ECO:0007669"/>
    <property type="project" value="TreeGrafter"/>
</dbReference>
<dbReference type="CDD" id="cd19498">
    <property type="entry name" value="RecA-like_HslU"/>
    <property type="match status" value="1"/>
</dbReference>
<dbReference type="FunFam" id="3.40.50.300:FF:000220">
    <property type="entry name" value="ATP-dependent protease ATPase subunit HslU"/>
    <property type="match status" value="1"/>
</dbReference>
<dbReference type="Gene3D" id="1.10.8.60">
    <property type="match status" value="1"/>
</dbReference>
<dbReference type="Gene3D" id="1.10.8.10">
    <property type="entry name" value="DNA helicase RuvA subunit, C-terminal domain"/>
    <property type="match status" value="1"/>
</dbReference>
<dbReference type="Gene3D" id="3.40.50.300">
    <property type="entry name" value="P-loop containing nucleotide triphosphate hydrolases"/>
    <property type="match status" value="2"/>
</dbReference>
<dbReference type="HAMAP" id="MF_00249">
    <property type="entry name" value="HslU"/>
    <property type="match status" value="1"/>
</dbReference>
<dbReference type="InterPro" id="IPR003593">
    <property type="entry name" value="AAA+_ATPase"/>
</dbReference>
<dbReference type="InterPro" id="IPR050052">
    <property type="entry name" value="ATP-dep_Clp_protease_ClpX"/>
</dbReference>
<dbReference type="InterPro" id="IPR003959">
    <property type="entry name" value="ATPase_AAA_core"/>
</dbReference>
<dbReference type="InterPro" id="IPR019489">
    <property type="entry name" value="Clp_ATPase_C"/>
</dbReference>
<dbReference type="InterPro" id="IPR004491">
    <property type="entry name" value="HslU"/>
</dbReference>
<dbReference type="InterPro" id="IPR027417">
    <property type="entry name" value="P-loop_NTPase"/>
</dbReference>
<dbReference type="NCBIfam" id="TIGR00390">
    <property type="entry name" value="hslU"/>
    <property type="match status" value="1"/>
</dbReference>
<dbReference type="NCBIfam" id="NF003544">
    <property type="entry name" value="PRK05201.1"/>
    <property type="match status" value="1"/>
</dbReference>
<dbReference type="PANTHER" id="PTHR48102">
    <property type="entry name" value="ATP-DEPENDENT CLP PROTEASE ATP-BINDING SUBUNIT CLPX-LIKE, MITOCHONDRIAL-RELATED"/>
    <property type="match status" value="1"/>
</dbReference>
<dbReference type="PANTHER" id="PTHR48102:SF3">
    <property type="entry name" value="ATP-DEPENDENT PROTEASE ATPASE SUBUNIT HSLU"/>
    <property type="match status" value="1"/>
</dbReference>
<dbReference type="Pfam" id="PF00004">
    <property type="entry name" value="AAA"/>
    <property type="match status" value="1"/>
</dbReference>
<dbReference type="Pfam" id="PF07724">
    <property type="entry name" value="AAA_2"/>
    <property type="match status" value="1"/>
</dbReference>
<dbReference type="Pfam" id="PF10431">
    <property type="entry name" value="ClpB_D2-small"/>
    <property type="match status" value="1"/>
</dbReference>
<dbReference type="SMART" id="SM00382">
    <property type="entry name" value="AAA"/>
    <property type="match status" value="1"/>
</dbReference>
<dbReference type="SMART" id="SM01086">
    <property type="entry name" value="ClpB_D2-small"/>
    <property type="match status" value="1"/>
</dbReference>
<dbReference type="SUPFAM" id="SSF52540">
    <property type="entry name" value="P-loop containing nucleoside triphosphate hydrolases"/>
    <property type="match status" value="1"/>
</dbReference>
<protein>
    <recommendedName>
        <fullName evidence="1">ATP-dependent protease ATPase subunit HslU</fullName>
    </recommendedName>
    <alternativeName>
        <fullName evidence="1">Unfoldase HslU</fullName>
    </alternativeName>
</protein>